<sequence length="492" mass="55264">MAKSKKKTDVVDSTNLPILELLSLKAPIFQSLLHPELPIIITGFGTGHIVCHRYDPAKLQSHLDRRRRIDTATTGKDAKKGVCPWIRLDIDLETGDLKFVDIEEQQQQKQTGKDEDLGVKTLWKTKRHKGSVRAMCFDSKGDNIFSVGSDNVLKKANTMTGKVVKKVNLSSLFNSEEKKNDKFTKLCASQTHPFILIGDESGNIHVINSENLALSNSIRSIHFGDSINDIFHFDKRSAYKFISLGQTTLAYFDVRDKDAKPNVAGNEDGKILISDDQEDEVLCGCFVDPEVADTLLCGMGEGIVTVWKPNKNDLEDQMSRIKISKDESIDCIVPTLQDDNCVWCGCSNGNIYKVNAKLGKVVEIRNHSELDEVSFVDLDFEYRVVSGGLENIKIWELSSDDVEENASVESDSDEPLSHSDEDLSDDTSSDDETTLVGLSKEELLDELDKDLKEDHQEEKESNSKSVKKRKIMKENNKKKDLYEHGIKKFDDL</sequence>
<protein>
    <recommendedName>
        <fullName>WD repeat-containing protein JIP5</fullName>
    </recommendedName>
    <alternativeName>
        <fullName>Jumonji domain-interacting protein 5</fullName>
    </alternativeName>
</protein>
<accession>Q06214</accession>
<accession>D6W4H0</accession>
<name>JIP5_YEAST</name>
<organism>
    <name type="scientific">Saccharomyces cerevisiae (strain ATCC 204508 / S288c)</name>
    <name type="common">Baker's yeast</name>
    <dbReference type="NCBI Taxonomy" id="559292"/>
    <lineage>
        <taxon>Eukaryota</taxon>
        <taxon>Fungi</taxon>
        <taxon>Dikarya</taxon>
        <taxon>Ascomycota</taxon>
        <taxon>Saccharomycotina</taxon>
        <taxon>Saccharomycetes</taxon>
        <taxon>Saccharomycetales</taxon>
        <taxon>Saccharomycetaceae</taxon>
        <taxon>Saccharomyces</taxon>
    </lineage>
</organism>
<proteinExistence type="evidence at protein level"/>
<comment type="subunit">
    <text evidence="4">Interacts with BUD27 and GIS1.</text>
</comment>
<comment type="subcellular location">
    <subcellularLocation>
        <location evidence="2">Nucleus</location>
        <location evidence="2">Nucleolus</location>
    </subcellularLocation>
</comment>
<comment type="miscellaneous">
    <text evidence="3">Present with 7750 molecules/cell in log phase SD medium.</text>
</comment>
<comment type="sequence caution" evidence="5">
    <conflict type="erroneous initiation">
        <sequence resource="EMBL-CDS" id="AAB68156"/>
    </conflict>
</comment>
<dbReference type="EMBL" id="U25840">
    <property type="protein sequence ID" value="AAB68156.1"/>
    <property type="status" value="ALT_INIT"/>
    <property type="molecule type" value="Genomic_DNA"/>
</dbReference>
<dbReference type="EMBL" id="BK006949">
    <property type="protein sequence ID" value="DAA11586.1"/>
    <property type="molecule type" value="Genomic_DNA"/>
</dbReference>
<dbReference type="PIR" id="S59828">
    <property type="entry name" value="S59828"/>
</dbReference>
<dbReference type="RefSeq" id="NP_015495.2">
    <property type="nucleotide sequence ID" value="NM_001184266.1"/>
</dbReference>
<dbReference type="SMR" id="Q06214"/>
<dbReference type="BioGRID" id="36342">
    <property type="interactions" value="123"/>
</dbReference>
<dbReference type="DIP" id="DIP-3805N"/>
<dbReference type="FunCoup" id="Q06214">
    <property type="interactions" value="153"/>
</dbReference>
<dbReference type="IntAct" id="Q06214">
    <property type="interactions" value="42"/>
</dbReference>
<dbReference type="MINT" id="Q06214"/>
<dbReference type="STRING" id="4932.YPR169W"/>
<dbReference type="iPTMnet" id="Q06214"/>
<dbReference type="PaxDb" id="4932-YPR169W"/>
<dbReference type="PeptideAtlas" id="Q06214"/>
<dbReference type="EnsemblFungi" id="YPR169W_mRNA">
    <property type="protein sequence ID" value="YPR169W"/>
    <property type="gene ID" value="YPR169W"/>
</dbReference>
<dbReference type="GeneID" id="856298"/>
<dbReference type="KEGG" id="sce:YPR169W"/>
<dbReference type="AGR" id="SGD:S000006373"/>
<dbReference type="SGD" id="S000006373">
    <property type="gene designation" value="JIP5"/>
</dbReference>
<dbReference type="VEuPathDB" id="FungiDB:YPR169W"/>
<dbReference type="eggNOG" id="KOG2444">
    <property type="taxonomic scope" value="Eukaryota"/>
</dbReference>
<dbReference type="GeneTree" id="ENSGT00940000153727"/>
<dbReference type="HOGENOM" id="CLU_035623_0_0_1"/>
<dbReference type="InParanoid" id="Q06214"/>
<dbReference type="OMA" id="QAIHPTE"/>
<dbReference type="OrthoDB" id="2288928at2759"/>
<dbReference type="BioCyc" id="YEAST:G3O-34297-MONOMER"/>
<dbReference type="BioGRID-ORCS" id="856298">
    <property type="hits" value="3 hits in 10 CRISPR screens"/>
</dbReference>
<dbReference type="PRO" id="PR:Q06214"/>
<dbReference type="Proteomes" id="UP000002311">
    <property type="component" value="Chromosome XVI"/>
</dbReference>
<dbReference type="RNAct" id="Q06214">
    <property type="molecule type" value="protein"/>
</dbReference>
<dbReference type="GO" id="GO:0005730">
    <property type="term" value="C:nucleolus"/>
    <property type="evidence" value="ECO:0007005"/>
    <property type="project" value="SGD"/>
</dbReference>
<dbReference type="GO" id="GO:0005634">
    <property type="term" value="C:nucleus"/>
    <property type="evidence" value="ECO:0007005"/>
    <property type="project" value="SGD"/>
</dbReference>
<dbReference type="GO" id="GO:0042273">
    <property type="term" value="P:ribosomal large subunit biogenesis"/>
    <property type="evidence" value="ECO:0000315"/>
    <property type="project" value="SGD"/>
</dbReference>
<dbReference type="FunFam" id="2.130.10.10:FF:002181">
    <property type="entry name" value="WD repeat-containing protein JIP5"/>
    <property type="match status" value="1"/>
</dbReference>
<dbReference type="Gene3D" id="2.130.10.10">
    <property type="entry name" value="YVTN repeat-like/Quinoprotein amine dehydrogenase"/>
    <property type="match status" value="2"/>
</dbReference>
<dbReference type="InterPro" id="IPR015943">
    <property type="entry name" value="WD40/YVTN_repeat-like_dom_sf"/>
</dbReference>
<dbReference type="InterPro" id="IPR036322">
    <property type="entry name" value="WD40_repeat_dom_sf"/>
</dbReference>
<dbReference type="InterPro" id="IPR051179">
    <property type="entry name" value="WD_repeat_multifunction"/>
</dbReference>
<dbReference type="PANTHER" id="PTHR19857:SF8">
    <property type="entry name" value="ANGIO-ASSOCIATED MIGRATORY CELL PROTEIN"/>
    <property type="match status" value="1"/>
</dbReference>
<dbReference type="PANTHER" id="PTHR19857">
    <property type="entry name" value="MITOCHONDRIAL DIVISION PROTEIN 1-RELATED"/>
    <property type="match status" value="1"/>
</dbReference>
<dbReference type="SUPFAM" id="SSF50978">
    <property type="entry name" value="WD40 repeat-like"/>
    <property type="match status" value="1"/>
</dbReference>
<feature type="chain" id="PRO_0000257817" description="WD repeat-containing protein JIP5">
    <location>
        <begin position="1"/>
        <end position="492"/>
    </location>
</feature>
<feature type="repeat" description="WD 1">
    <location>
        <begin position="127"/>
        <end position="166"/>
    </location>
</feature>
<feature type="repeat" description="WD 2">
    <location>
        <begin position="178"/>
        <end position="217"/>
    </location>
</feature>
<feature type="repeat" description="WD 3">
    <location>
        <begin position="236"/>
        <end position="274"/>
    </location>
</feature>
<feature type="repeat" description="WD 4">
    <location>
        <begin position="276"/>
        <end position="317"/>
    </location>
</feature>
<feature type="repeat" description="WD 5">
    <location>
        <begin position="365"/>
        <end position="405"/>
    </location>
</feature>
<feature type="region of interest" description="Disordered" evidence="1">
    <location>
        <begin position="404"/>
        <end position="472"/>
    </location>
</feature>
<feature type="compositionally biased region" description="Acidic residues" evidence="1">
    <location>
        <begin position="404"/>
        <end position="414"/>
    </location>
</feature>
<feature type="compositionally biased region" description="Acidic residues" evidence="1">
    <location>
        <begin position="422"/>
        <end position="433"/>
    </location>
</feature>
<feature type="compositionally biased region" description="Basic and acidic residues" evidence="1">
    <location>
        <begin position="449"/>
        <end position="462"/>
    </location>
</feature>
<reference key="1">
    <citation type="journal article" date="1997" name="Nature">
        <title>The nucleotide sequence of Saccharomyces cerevisiae chromosome XVI.</title>
        <authorList>
            <person name="Bussey H."/>
            <person name="Storms R.K."/>
            <person name="Ahmed A."/>
            <person name="Albermann K."/>
            <person name="Allen E."/>
            <person name="Ansorge W."/>
            <person name="Araujo R."/>
            <person name="Aparicio A."/>
            <person name="Barrell B.G."/>
            <person name="Badcock K."/>
            <person name="Benes V."/>
            <person name="Botstein D."/>
            <person name="Bowman S."/>
            <person name="Brueckner M."/>
            <person name="Carpenter J."/>
            <person name="Cherry J.M."/>
            <person name="Chung E."/>
            <person name="Churcher C.M."/>
            <person name="Coster F."/>
            <person name="Davis K."/>
            <person name="Davis R.W."/>
            <person name="Dietrich F.S."/>
            <person name="Delius H."/>
            <person name="DiPaolo T."/>
            <person name="Dubois E."/>
            <person name="Duesterhoeft A."/>
            <person name="Duncan M."/>
            <person name="Floeth M."/>
            <person name="Fortin N."/>
            <person name="Friesen J.D."/>
            <person name="Fritz C."/>
            <person name="Goffeau A."/>
            <person name="Hall J."/>
            <person name="Hebling U."/>
            <person name="Heumann K."/>
            <person name="Hilbert H."/>
            <person name="Hillier L.W."/>
            <person name="Hunicke-Smith S."/>
            <person name="Hyman R.W."/>
            <person name="Johnston M."/>
            <person name="Kalman S."/>
            <person name="Kleine K."/>
            <person name="Komp C."/>
            <person name="Kurdi O."/>
            <person name="Lashkari D."/>
            <person name="Lew H."/>
            <person name="Lin A."/>
            <person name="Lin D."/>
            <person name="Louis E.J."/>
            <person name="Marathe R."/>
            <person name="Messenguy F."/>
            <person name="Mewes H.-W."/>
            <person name="Mirtipati S."/>
            <person name="Moestl D."/>
            <person name="Mueller-Auer S."/>
            <person name="Namath A."/>
            <person name="Nentwich U."/>
            <person name="Oefner P."/>
            <person name="Pearson D."/>
            <person name="Petel F.X."/>
            <person name="Pohl T.M."/>
            <person name="Purnelle B."/>
            <person name="Rajandream M.A."/>
            <person name="Rechmann S."/>
            <person name="Rieger M."/>
            <person name="Riles L."/>
            <person name="Roberts D."/>
            <person name="Schaefer M."/>
            <person name="Scharfe M."/>
            <person name="Scherens B."/>
            <person name="Schramm S."/>
            <person name="Schroeder M."/>
            <person name="Sdicu A.-M."/>
            <person name="Tettelin H."/>
            <person name="Urrestarazu L.A."/>
            <person name="Ushinsky S."/>
            <person name="Vierendeels F."/>
            <person name="Vissers S."/>
            <person name="Voss H."/>
            <person name="Walsh S.V."/>
            <person name="Wambutt R."/>
            <person name="Wang Y."/>
            <person name="Wedler E."/>
            <person name="Wedler H."/>
            <person name="Winnett E."/>
            <person name="Zhong W.-W."/>
            <person name="Zollner A."/>
            <person name="Vo D.H."/>
            <person name="Hani J."/>
        </authorList>
    </citation>
    <scope>NUCLEOTIDE SEQUENCE [LARGE SCALE GENOMIC DNA]</scope>
    <source>
        <strain>ATCC 204508 / S288c</strain>
    </source>
</reference>
<reference key="2">
    <citation type="journal article" date="2014" name="G3 (Bethesda)">
        <title>The reference genome sequence of Saccharomyces cerevisiae: Then and now.</title>
        <authorList>
            <person name="Engel S.R."/>
            <person name="Dietrich F.S."/>
            <person name="Fisk D.G."/>
            <person name="Binkley G."/>
            <person name="Balakrishnan R."/>
            <person name="Costanzo M.C."/>
            <person name="Dwight S.S."/>
            <person name="Hitz B.C."/>
            <person name="Karra K."/>
            <person name="Nash R.S."/>
            <person name="Weng S."/>
            <person name="Wong E.D."/>
            <person name="Lloyd P."/>
            <person name="Skrzypek M.S."/>
            <person name="Miyasato S.R."/>
            <person name="Simison M."/>
            <person name="Cherry J.M."/>
        </authorList>
    </citation>
    <scope>GENOME REANNOTATION</scope>
    <source>
        <strain>ATCC 204508 / S288c</strain>
    </source>
</reference>
<reference key="3">
    <citation type="journal article" date="2003" name="Mol. Cell">
        <title>Assigning function to yeast proteins by integration of technologies.</title>
        <authorList>
            <person name="Hazbun T.R."/>
            <person name="Malmstroem L."/>
            <person name="Anderson S."/>
            <person name="Graczyk B.J."/>
            <person name="Fox B."/>
            <person name="Riffle M."/>
            <person name="Sundin B.A."/>
            <person name="Aranda J.D."/>
            <person name="McDonald W.H."/>
            <person name="Chiu C.-H."/>
            <person name="Snydsman B.E."/>
            <person name="Bradley P."/>
            <person name="Muller E.G.D."/>
            <person name="Fields S."/>
            <person name="Baker D."/>
            <person name="Yates J.R. III"/>
            <person name="Davis T.N."/>
        </authorList>
    </citation>
    <scope>IDENTIFICATION BY MASS SPECTROMETRY</scope>
</reference>
<reference key="4">
    <citation type="journal article" date="2003" name="Nature">
        <title>Sequencing and comparison of yeast species to identify genes and regulatory elements.</title>
        <authorList>
            <person name="Kellis M."/>
            <person name="Patterson N."/>
            <person name="Endrizzi M."/>
            <person name="Birren B.W."/>
            <person name="Lander E.S."/>
        </authorList>
    </citation>
    <scope>IDENTIFICATION OF PROBABLE INITIATION SITE</scope>
</reference>
<reference key="5">
    <citation type="journal article" date="2003" name="Nature">
        <title>Global analysis of protein localization in budding yeast.</title>
        <authorList>
            <person name="Huh W.-K."/>
            <person name="Falvo J.V."/>
            <person name="Gerke L.C."/>
            <person name="Carroll A.S."/>
            <person name="Howson R.W."/>
            <person name="Weissman J.S."/>
            <person name="O'Shea E.K."/>
        </authorList>
    </citation>
    <scope>SUBCELLULAR LOCATION [LARGE SCALE ANALYSIS]</scope>
</reference>
<reference key="6">
    <citation type="journal article" date="2003" name="Nature">
        <title>Global analysis of protein expression in yeast.</title>
        <authorList>
            <person name="Ghaemmaghami S."/>
            <person name="Huh W.-K."/>
            <person name="Bower K."/>
            <person name="Howson R.W."/>
            <person name="Belle A."/>
            <person name="Dephoure N."/>
            <person name="O'Shea E.K."/>
            <person name="Weissman J.S."/>
        </authorList>
    </citation>
    <scope>LEVEL OF PROTEIN EXPRESSION [LARGE SCALE ANALYSIS]</scope>
</reference>
<reference key="7">
    <citation type="journal article" date="2005" name="Nucleic Acids Res.">
        <title>Mapping of transcription start sites in Saccharomyces cerevisiae using 5' SAGE.</title>
        <authorList>
            <person name="Zhang Z."/>
            <person name="Dietrich F.S."/>
        </authorList>
    </citation>
    <scope>IDENTIFICATION OF PROBABLE INITIATION SITE</scope>
</reference>
<reference key="8">
    <citation type="journal article" date="2007" name="Mol. Genet. Genomics">
        <title>The jmjN and jmjC domains of the yeast zinc finger protein Gis1 interact with 19 proteins involved in transcription, sumoylation and DNA repair.</title>
        <authorList>
            <person name="Tronnersjoe S."/>
            <person name="Hanefalk C."/>
            <person name="Balciunas D."/>
            <person name="Hu G.-Z."/>
            <person name="Nordberg N."/>
            <person name="Muren E."/>
            <person name="Ronne H."/>
        </authorList>
    </citation>
    <scope>INTERACTION WITH BUD27 AND GIS1</scope>
</reference>
<gene>
    <name type="primary">JIP5</name>
    <name type="ordered locus">YPR169W</name>
</gene>
<keyword id="KW-0539">Nucleus</keyword>
<keyword id="KW-1185">Reference proteome</keyword>
<keyword id="KW-0677">Repeat</keyword>
<keyword id="KW-0853">WD repeat</keyword>
<evidence type="ECO:0000256" key="1">
    <source>
        <dbReference type="SAM" id="MobiDB-lite"/>
    </source>
</evidence>
<evidence type="ECO:0000269" key="2">
    <source>
    </source>
</evidence>
<evidence type="ECO:0000269" key="3">
    <source>
    </source>
</evidence>
<evidence type="ECO:0000269" key="4">
    <source>
    </source>
</evidence>
<evidence type="ECO:0000305" key="5"/>